<comment type="function">
    <text evidence="1">Component of the 26S proteasome, a multiprotein complex involved in the ATP-dependent degradation of ubiquitinated proteins. This complex plays a key role in the maintenance of protein homeostasis by removing misfolded or damaged proteins, which could impair cellular functions, and by removing proteins whose functions are no longer required. Therefore, the proteasome participates in numerous cellular processes, including cell cycle progression, apoptosis, or DNA damage repair.</text>
</comment>
<comment type="function">
    <text evidence="1">Binds to the intracellular domain of tumor necrosis factor type 1 receptor. The binding domain of TRAP1 and TRAP2 resides outside the death domain of TNFR1.</text>
</comment>
<comment type="subunit">
    <text evidence="1 2">Component of the 19S proteasome regulatory particle complex. The 26S proteasome consists of a 20S core particle (CP) and two 19S regulatory subunits (RP). The regulatory particle is made of a lid composed of 9 subunits, a base containing 6 ATPases and few additional components including PSMD2 (By similarity). Interacts with RPGRIP1L (By similarity). Interacts with CRY1 in a KDM8-dependent manner (By similarity). Interacts (via C-terminus) with phosphatase UBLCP1 (via ubiquitin-like domain); the interaction recruits UBLCP1 to the 19S regulatory particle where it dephosphorylates 19S subunit PSMC2/RPT1 which impairs PSMC2 ATPase activity and disrupts 26S proteasome assembly (By similarity).</text>
</comment>
<comment type="similarity">
    <text evidence="4">Belongs to the proteasome subunit S2 family.</text>
</comment>
<reference key="1">
    <citation type="journal article" date="2005" name="BMC Genomics">
        <title>Characterization of 954 bovine full-CDS cDNA sequences.</title>
        <authorList>
            <person name="Harhay G.P."/>
            <person name="Sonstegard T.S."/>
            <person name="Keele J.W."/>
            <person name="Heaton M.P."/>
            <person name="Clawson M.L."/>
            <person name="Snelling W.M."/>
            <person name="Wiedmann R.T."/>
            <person name="Van Tassell C.P."/>
            <person name="Smith T.P.L."/>
        </authorList>
    </citation>
    <scope>NUCLEOTIDE SEQUENCE [LARGE SCALE MRNA]</scope>
</reference>
<reference key="2">
    <citation type="submission" date="2005-09" db="EMBL/GenBank/DDBJ databases">
        <authorList>
            <consortium name="NIH - Mammalian Gene Collection (MGC) project"/>
        </authorList>
    </citation>
    <scope>NUCLEOTIDE SEQUENCE [LARGE SCALE MRNA] OF 2-908</scope>
    <source>
        <strain>Hereford</strain>
        <tissue>Ascending colon</tissue>
    </source>
</reference>
<reference key="3">
    <citation type="journal article" date="1996" name="Eur. J. Biochem.">
        <title>cDNA cloning and functional analysis of the p97 subunit of the 26S proteasome, a polypeptide identical to the type-1 tumor-necrosis-factor-receptor-associated protein-2/55.11.</title>
        <authorList>
            <person name="Tsurumi C."/>
            <person name="Shimizu Y."/>
            <person name="Saeki M."/>
            <person name="Kato S."/>
            <person name="DeMartino G.N."/>
            <person name="Slaughter C.A."/>
            <person name="Fujimuro M."/>
            <person name="Yokosawa H."/>
            <person name="Yamasaki M."/>
            <person name="Hendil K.B."/>
            <person name="Toh-e A."/>
            <person name="Tanahashi N."/>
            <person name="Tanaka K."/>
        </authorList>
    </citation>
    <scope>PROTEIN SEQUENCE OF 9-26; 51-66; 98-105; 142-153; 169-189 AND 432-442</scope>
</reference>
<reference key="4">
    <citation type="journal article" date="1994" name="J. Biol. Chem.">
        <title>PA700, an ATP-dependent activator of the 20 S proteasome, is an ATPase containing multiple members of a nucleotide-binding protein family.</title>
        <authorList>
            <person name="DeMartino G.N."/>
            <person name="Moomaw C.R."/>
            <person name="Zagnitko O.P."/>
            <person name="Proske R.J."/>
            <person name="Chu-Ping M."/>
            <person name="Afendis S.J."/>
            <person name="Swaffield J.C."/>
            <person name="Slaughter C.A."/>
        </authorList>
    </citation>
    <scope>PROTEIN SEQUENCE OF 9-26</scope>
</reference>
<evidence type="ECO:0000250" key="1">
    <source>
        <dbReference type="UniProtKB" id="Q13200"/>
    </source>
</evidence>
<evidence type="ECO:0000250" key="2">
    <source>
        <dbReference type="UniProtKB" id="Q8VDM4"/>
    </source>
</evidence>
<evidence type="ECO:0000256" key="3">
    <source>
        <dbReference type="SAM" id="MobiDB-lite"/>
    </source>
</evidence>
<evidence type="ECO:0000305" key="4"/>
<name>PSMD2_BOVIN</name>
<proteinExistence type="evidence at protein level"/>
<organism>
    <name type="scientific">Bos taurus</name>
    <name type="common">Bovine</name>
    <dbReference type="NCBI Taxonomy" id="9913"/>
    <lineage>
        <taxon>Eukaryota</taxon>
        <taxon>Metazoa</taxon>
        <taxon>Chordata</taxon>
        <taxon>Craniata</taxon>
        <taxon>Vertebrata</taxon>
        <taxon>Euteleostomi</taxon>
        <taxon>Mammalia</taxon>
        <taxon>Eutheria</taxon>
        <taxon>Laurasiatheria</taxon>
        <taxon>Artiodactyla</taxon>
        <taxon>Ruminantia</taxon>
        <taxon>Pecora</taxon>
        <taxon>Bovidae</taxon>
        <taxon>Bovinae</taxon>
        <taxon>Bos</taxon>
    </lineage>
</organism>
<sequence length="908" mass="100258">MEEGGRDKAPLQPQQPPATSPGSGDEKPSGKERRDAGDKDKEQELSEEDKQLQDELEMLVERLGEKDTSLYRPALEELRRQIRSSTTSMTSVPKPLKFLRPHYGKLKEIYENMAPGENKRFAADIISVLAMTMSGERECLKYRLVGSQEELASWGHEYVRHLAGEVAKEWQELDDAEKTQREPLLTLVKEIVPYNMAHNAEHEACDLLMEIEQVDMLEKDIDENAYAKVCLYLTSCVNYVPEPENSALLRCALGVFRKFSRFPEALRLALMLNDMELVEDIFTSCKDVVVQKQMAFMLGRHGVFLELSEDVEEYEDLTEIMSNVQLNSNFLALARELDIMEPKVPDDIYKTHLENNRFGGSGSQVDSARMNLASSFVNGFVNAAFGQDKLLTDDGNKWLYKNKDHGMLSAAASLGMILLWDVDGGLTQIDKYLYSSEDYIKSGALLACGIVNSGVRNECDPALALLSDYVLHNSNTMRLGSIFGLGLAYAGSNREDVLTLLLPVMGDSKSSMEVAGVTALACGMIAVGSCNGDVTSTILQTIMEKSETELKDTYARWLPLGLGLNHLGKGEAIEAILAALEVVSEPFRSFANTLVDVCAYAGSGNVLKVQQLLHICSEHFDSKEKEEDKDKKEKKDKDKKEAPADMGAHQGVAVLGIALIAMGEEIGAEMALRTFGHLLRYGEPTLRRAVPLALALISVSNPRLNILDTLSKFSHDADPEVSYNSIFAMGMVGSGTNNARLAAMLRQLAQYHAKDPNNLFMVRLAQGLTHLGKGTLTLCPYHSDRQLMSQVAVAGLLTVLVSFLDVRNIILGKSHYVLYGLVAAMQPRMLVTFDEELRPLPVSVRVGQAVDVVGQAGKPKTITGFQTHTTPVLLAHGERAELATEEFLPVTPILEGFVILRKNPNYDL</sequence>
<dbReference type="EMBL" id="BT030686">
    <property type="protein sequence ID" value="ABS45002.1"/>
    <property type="molecule type" value="mRNA"/>
</dbReference>
<dbReference type="EMBL" id="BC105524">
    <property type="protein sequence ID" value="AAI05525.1"/>
    <property type="molecule type" value="mRNA"/>
</dbReference>
<dbReference type="RefSeq" id="NP_001094667.1">
    <property type="nucleotide sequence ID" value="NM_001101197.1"/>
</dbReference>
<dbReference type="SMR" id="P56701"/>
<dbReference type="BioGRID" id="196351">
    <property type="interactions" value="1"/>
</dbReference>
<dbReference type="FunCoup" id="P56701">
    <property type="interactions" value="4277"/>
</dbReference>
<dbReference type="STRING" id="9913.ENSBTAP00000007436"/>
<dbReference type="PaxDb" id="9913-ENSBTAP00000007436"/>
<dbReference type="PeptideAtlas" id="P56701"/>
<dbReference type="Ensembl" id="ENSBTAT00000007436.6">
    <property type="protein sequence ID" value="ENSBTAP00000007436.5"/>
    <property type="gene ID" value="ENSBTAG00000005660.7"/>
</dbReference>
<dbReference type="GeneID" id="539784"/>
<dbReference type="KEGG" id="bta:539784"/>
<dbReference type="CTD" id="5708"/>
<dbReference type="VEuPathDB" id="HostDB:ENSBTAG00000005660"/>
<dbReference type="VGNC" id="VGNC:33466">
    <property type="gene designation" value="PSMD2"/>
</dbReference>
<dbReference type="eggNOG" id="KOG2005">
    <property type="taxonomic scope" value="Eukaryota"/>
</dbReference>
<dbReference type="GeneTree" id="ENSGT00940000153386"/>
<dbReference type="HOGENOM" id="CLU_008705_1_0_1"/>
<dbReference type="InParanoid" id="P56701"/>
<dbReference type="OMA" id="GTCNGDI"/>
<dbReference type="OrthoDB" id="10252509at2759"/>
<dbReference type="TreeFam" id="TF105739"/>
<dbReference type="Reactome" id="R-BTA-1169091">
    <property type="pathway name" value="Activation of NF-kappaB in B cells"/>
</dbReference>
<dbReference type="Reactome" id="R-BTA-1234176">
    <property type="pathway name" value="Oxygen-dependent proline hydroxylation of Hypoxia-inducible Factor Alpha"/>
</dbReference>
<dbReference type="Reactome" id="R-BTA-1236978">
    <property type="pathway name" value="Cross-presentation of soluble exogenous antigens (endosomes)"/>
</dbReference>
<dbReference type="Reactome" id="R-BTA-174084">
    <property type="pathway name" value="Autodegradation of Cdh1 by Cdh1:APC/C"/>
</dbReference>
<dbReference type="Reactome" id="R-BTA-174154">
    <property type="pathway name" value="APC/C:Cdc20 mediated degradation of Securin"/>
</dbReference>
<dbReference type="Reactome" id="R-BTA-174178">
    <property type="pathway name" value="APC/C:Cdh1 mediated degradation of Cdc20 and other APC/C:Cdh1 targeted proteins in late mitosis/early G1"/>
</dbReference>
<dbReference type="Reactome" id="R-BTA-174184">
    <property type="pathway name" value="Cdc20:Phospho-APC/C mediated degradation of Cyclin A"/>
</dbReference>
<dbReference type="Reactome" id="R-BTA-187577">
    <property type="pathway name" value="SCF(Skp2)-mediated degradation of p27/p21"/>
</dbReference>
<dbReference type="Reactome" id="R-BTA-195253">
    <property type="pathway name" value="Degradation of beta-catenin by the destruction complex"/>
</dbReference>
<dbReference type="Reactome" id="R-BTA-202424">
    <property type="pathway name" value="Downstream TCR signaling"/>
</dbReference>
<dbReference type="Reactome" id="R-BTA-2467813">
    <property type="pathway name" value="Separation of Sister Chromatids"/>
</dbReference>
<dbReference type="Reactome" id="R-BTA-2871837">
    <property type="pathway name" value="FCERI mediated NF-kB activation"/>
</dbReference>
<dbReference type="Reactome" id="R-BTA-349425">
    <property type="pathway name" value="Autodegradation of the E3 ubiquitin ligase COP1"/>
</dbReference>
<dbReference type="Reactome" id="R-BTA-350562">
    <property type="pathway name" value="Regulation of ornithine decarboxylase (ODC)"/>
</dbReference>
<dbReference type="Reactome" id="R-BTA-382556">
    <property type="pathway name" value="ABC-family proteins mediated transport"/>
</dbReference>
<dbReference type="Reactome" id="R-BTA-450408">
    <property type="pathway name" value="AUF1 (hnRNP D0) binds and destabilizes mRNA"/>
</dbReference>
<dbReference type="Reactome" id="R-BTA-4608870">
    <property type="pathway name" value="Asymmetric localization of PCP proteins"/>
</dbReference>
<dbReference type="Reactome" id="R-BTA-4641257">
    <property type="pathway name" value="Degradation of AXIN"/>
</dbReference>
<dbReference type="Reactome" id="R-BTA-4641258">
    <property type="pathway name" value="Degradation of DVL"/>
</dbReference>
<dbReference type="Reactome" id="R-BTA-5358346">
    <property type="pathway name" value="Hedgehog ligand biogenesis"/>
</dbReference>
<dbReference type="Reactome" id="R-BTA-5607761">
    <property type="pathway name" value="Dectin-1 mediated noncanonical NF-kB signaling"/>
</dbReference>
<dbReference type="Reactome" id="R-BTA-5607764">
    <property type="pathway name" value="CLEC7A (Dectin-1) signaling"/>
</dbReference>
<dbReference type="Reactome" id="R-BTA-5610780">
    <property type="pathway name" value="Degradation of GLI1 by the proteasome"/>
</dbReference>
<dbReference type="Reactome" id="R-BTA-5610785">
    <property type="pathway name" value="GLI3 is processed to GLI3R by the proteasome"/>
</dbReference>
<dbReference type="Reactome" id="R-BTA-5632684">
    <property type="pathway name" value="Hedgehog 'on' state"/>
</dbReference>
<dbReference type="Reactome" id="R-BTA-5668541">
    <property type="pathway name" value="TNFR2 non-canonical NF-kB pathway"/>
</dbReference>
<dbReference type="Reactome" id="R-BTA-5676590">
    <property type="pathway name" value="NIK--&gt;noncanonical NF-kB signaling"/>
</dbReference>
<dbReference type="Reactome" id="R-BTA-5687128">
    <property type="pathway name" value="MAPK6/MAPK4 signaling"/>
</dbReference>
<dbReference type="Reactome" id="R-BTA-5689603">
    <property type="pathway name" value="UCH proteinases"/>
</dbReference>
<dbReference type="Reactome" id="R-BTA-5689880">
    <property type="pathway name" value="Ub-specific processing proteases"/>
</dbReference>
<dbReference type="Reactome" id="R-BTA-6798695">
    <property type="pathway name" value="Neutrophil degranulation"/>
</dbReference>
<dbReference type="Reactome" id="R-BTA-68867">
    <property type="pathway name" value="Assembly of the pre-replicative complex"/>
</dbReference>
<dbReference type="Reactome" id="R-BTA-68949">
    <property type="pathway name" value="Orc1 removal from chromatin"/>
</dbReference>
<dbReference type="Reactome" id="R-BTA-69017">
    <property type="pathway name" value="CDK-mediated phosphorylation and removal of Cdc6"/>
</dbReference>
<dbReference type="Reactome" id="R-BTA-69481">
    <property type="pathway name" value="G2/M Checkpoints"/>
</dbReference>
<dbReference type="Reactome" id="R-BTA-69601">
    <property type="pathway name" value="Ubiquitin Mediated Degradation of Phosphorylated Cdc25A"/>
</dbReference>
<dbReference type="Reactome" id="R-BTA-75815">
    <property type="pathway name" value="Ubiquitin-dependent degradation of Cyclin D"/>
</dbReference>
<dbReference type="Reactome" id="R-BTA-8852276">
    <property type="pathway name" value="The role of GTSE1 in G2/M progression after G2 checkpoint"/>
</dbReference>
<dbReference type="Reactome" id="R-BTA-8854050">
    <property type="pathway name" value="FBXL7 down-regulates AURKA during mitotic entry and in early mitosis"/>
</dbReference>
<dbReference type="Reactome" id="R-BTA-8939236">
    <property type="pathway name" value="RUNX1 regulates transcription of genes involved in differentiation of HSCs"/>
</dbReference>
<dbReference type="Reactome" id="R-BTA-8939902">
    <property type="pathway name" value="Regulation of RUNX2 expression and activity"/>
</dbReference>
<dbReference type="Reactome" id="R-BTA-8941858">
    <property type="pathway name" value="Regulation of RUNX3 expression and activity"/>
</dbReference>
<dbReference type="Reactome" id="R-BTA-8948751">
    <property type="pathway name" value="Regulation of PTEN stability and activity"/>
</dbReference>
<dbReference type="Reactome" id="R-BTA-8951664">
    <property type="pathway name" value="Neddylation"/>
</dbReference>
<dbReference type="Reactome" id="R-BTA-9020702">
    <property type="pathway name" value="Interleukin-1 signaling"/>
</dbReference>
<dbReference type="Reactome" id="R-BTA-9755511">
    <property type="pathway name" value="KEAP1-NFE2L2 pathway"/>
</dbReference>
<dbReference type="Reactome" id="R-BTA-9762114">
    <property type="pathway name" value="GSK3B and BTRC:CUL1-mediated-degradation of NFE2L2"/>
</dbReference>
<dbReference type="Reactome" id="R-BTA-983168">
    <property type="pathway name" value="Antigen processing: Ubiquitination &amp; Proteasome degradation"/>
</dbReference>
<dbReference type="Reactome" id="R-BTA-9907900">
    <property type="pathway name" value="Proteasome assembly"/>
</dbReference>
<dbReference type="Proteomes" id="UP000009136">
    <property type="component" value="Chromosome 1"/>
</dbReference>
<dbReference type="Bgee" id="ENSBTAG00000005660">
    <property type="expression patterns" value="Expressed in granulosa cell and 105 other cell types or tissues"/>
</dbReference>
<dbReference type="GO" id="GO:0005829">
    <property type="term" value="C:cytosol"/>
    <property type="evidence" value="ECO:0000304"/>
    <property type="project" value="Reactome"/>
</dbReference>
<dbReference type="GO" id="GO:0005634">
    <property type="term" value="C:nucleus"/>
    <property type="evidence" value="ECO:0000318"/>
    <property type="project" value="GO_Central"/>
</dbReference>
<dbReference type="GO" id="GO:0022624">
    <property type="term" value="C:proteasome accessory complex"/>
    <property type="evidence" value="ECO:0000250"/>
    <property type="project" value="UniProtKB"/>
</dbReference>
<dbReference type="GO" id="GO:0008540">
    <property type="term" value="C:proteasome regulatory particle, base subcomplex"/>
    <property type="evidence" value="ECO:0000318"/>
    <property type="project" value="GO_Central"/>
</dbReference>
<dbReference type="GO" id="GO:0034515">
    <property type="term" value="C:proteasome storage granule"/>
    <property type="evidence" value="ECO:0000318"/>
    <property type="project" value="GO_Central"/>
</dbReference>
<dbReference type="GO" id="GO:0030234">
    <property type="term" value="F:enzyme regulator activity"/>
    <property type="evidence" value="ECO:0007669"/>
    <property type="project" value="InterPro"/>
</dbReference>
<dbReference type="GO" id="GO:0043161">
    <property type="term" value="P:proteasome-mediated ubiquitin-dependent protein catabolic process"/>
    <property type="evidence" value="ECO:0000318"/>
    <property type="project" value="GO_Central"/>
</dbReference>
<dbReference type="GO" id="GO:0042176">
    <property type="term" value="P:regulation of protein catabolic process"/>
    <property type="evidence" value="ECO:0007669"/>
    <property type="project" value="InterPro"/>
</dbReference>
<dbReference type="FunFam" id="1.25.10.10:FF:000026">
    <property type="entry name" value="26S proteasome non-ATPase regulatory subunit 2"/>
    <property type="match status" value="1"/>
</dbReference>
<dbReference type="Gene3D" id="1.25.10.10">
    <property type="entry name" value="Leucine-rich Repeat Variant"/>
    <property type="match status" value="1"/>
</dbReference>
<dbReference type="InterPro" id="IPR016643">
    <property type="entry name" value="26S_Psome_Rpn1"/>
</dbReference>
<dbReference type="InterPro" id="IPR011989">
    <property type="entry name" value="ARM-like"/>
</dbReference>
<dbReference type="InterPro" id="IPR016024">
    <property type="entry name" value="ARM-type_fold"/>
</dbReference>
<dbReference type="InterPro" id="IPR002015">
    <property type="entry name" value="Proteasome/cyclosome_rpt"/>
</dbReference>
<dbReference type="InterPro" id="IPR041433">
    <property type="entry name" value="RPN1_C"/>
</dbReference>
<dbReference type="InterPro" id="IPR040892">
    <property type="entry name" value="RPN1_N"/>
</dbReference>
<dbReference type="PANTHER" id="PTHR10943">
    <property type="entry name" value="26S PROTEASOME NON-ATPASE REGULATORY SUBUNIT"/>
    <property type="match status" value="1"/>
</dbReference>
<dbReference type="PANTHER" id="PTHR10943:SF1">
    <property type="entry name" value="26S PROTEASOME NON-ATPASE REGULATORY SUBUNIT 2"/>
    <property type="match status" value="1"/>
</dbReference>
<dbReference type="Pfam" id="PF01851">
    <property type="entry name" value="PC_rep"/>
    <property type="match status" value="2"/>
</dbReference>
<dbReference type="Pfam" id="PF18051">
    <property type="entry name" value="RPN1_C"/>
    <property type="match status" value="1"/>
</dbReference>
<dbReference type="Pfam" id="PF17781">
    <property type="entry name" value="RPN1_RPN2_N"/>
    <property type="match status" value="1"/>
</dbReference>
<dbReference type="PIRSF" id="PIRSF015965">
    <property type="entry name" value="26S_Psome_Rpn1"/>
    <property type="match status" value="1"/>
</dbReference>
<dbReference type="SUPFAM" id="SSF48371">
    <property type="entry name" value="ARM repeat"/>
    <property type="match status" value="1"/>
</dbReference>
<gene>
    <name type="primary">PSMD2</name>
    <name type="synonym">TRAP2</name>
</gene>
<feature type="chain" id="PRO_0000173809" description="26S proteasome non-ATPase regulatory subunit 2">
    <location>
        <begin position="1"/>
        <end position="908"/>
    </location>
</feature>
<feature type="repeat" description="PC 1">
    <location>
        <begin position="409"/>
        <end position="442"/>
    </location>
</feature>
<feature type="repeat" description="PC 2">
    <location>
        <begin position="443"/>
        <end position="479"/>
    </location>
</feature>
<feature type="repeat" description="PC 3">
    <location>
        <begin position="480"/>
        <end position="514"/>
    </location>
</feature>
<feature type="repeat" description="PC 4">
    <location>
        <begin position="517"/>
        <end position="551"/>
    </location>
</feature>
<feature type="repeat" description="PC 5">
    <location>
        <begin position="560"/>
        <end position="589"/>
    </location>
</feature>
<feature type="repeat" description="PC 6">
    <location>
        <begin position="692"/>
        <end position="723"/>
    </location>
</feature>
<feature type="repeat" description="PC 7">
    <location>
        <begin position="742"/>
        <end position="757"/>
    </location>
</feature>
<feature type="region of interest" description="Disordered" evidence="3">
    <location>
        <begin position="1"/>
        <end position="52"/>
    </location>
</feature>
<feature type="region of interest" description="Disordered" evidence="3">
    <location>
        <begin position="623"/>
        <end position="645"/>
    </location>
</feature>
<feature type="region of interest" description="Required for interaction with UBLCP1" evidence="1">
    <location>
        <begin position="708"/>
        <end position="903"/>
    </location>
</feature>
<feature type="compositionally biased region" description="Basic and acidic residues" evidence="3">
    <location>
        <begin position="24"/>
        <end position="52"/>
    </location>
</feature>
<feature type="compositionally biased region" description="Basic and acidic residues" evidence="3">
    <location>
        <begin position="623"/>
        <end position="643"/>
    </location>
</feature>
<feature type="modified residue" description="N-acetylmethionine" evidence="2">
    <location>
        <position position="1"/>
    </location>
</feature>
<feature type="modified residue" description="Phosphoserine" evidence="1">
    <location>
        <position position="29"/>
    </location>
</feature>
<feature type="modified residue" description="Phosphoserine" evidence="1">
    <location>
        <position position="147"/>
    </location>
</feature>
<feature type="modified residue" description="Phosphotyrosine" evidence="1">
    <location>
        <position position="194"/>
    </location>
</feature>
<feature type="modified residue" description="Phosphoserine" evidence="1">
    <location>
        <position position="361"/>
    </location>
</feature>
<feature type="modified residue" description="Phosphoserine" evidence="1">
    <location>
        <position position="363"/>
    </location>
</feature>
<feature type="modified residue" description="N6-acetyllysine" evidence="2">
    <location>
        <position position="551"/>
    </location>
</feature>
<keyword id="KW-0007">Acetylation</keyword>
<keyword id="KW-0903">Direct protein sequencing</keyword>
<keyword id="KW-0597">Phosphoprotein</keyword>
<keyword id="KW-0647">Proteasome</keyword>
<keyword id="KW-1185">Reference proteome</keyword>
<keyword id="KW-0677">Repeat</keyword>
<protein>
    <recommendedName>
        <fullName>26S proteasome non-ATPase regulatory subunit 2</fullName>
    </recommendedName>
    <alternativeName>
        <fullName>26S proteasome regulatory subunit RPN1</fullName>
    </alternativeName>
    <alternativeName>
        <fullName>26S proteasome regulatory subunit S2</fullName>
    </alternativeName>
    <alternativeName>
        <fullName>26S proteasome subunit p97</fullName>
    </alternativeName>
    <alternativeName>
        <fullName>Tumor necrosis factor type 1 receptor-associated protein 2</fullName>
    </alternativeName>
</protein>
<accession>P56701</accession>
<accession>A7E3R5</accession>
<accession>Q2HJE3</accession>
<accession>Q9TRA7</accession>